<evidence type="ECO:0000255" key="1">
    <source>
        <dbReference type="HAMAP-Rule" id="MF_00692"/>
    </source>
</evidence>
<comment type="function">
    <text evidence="1">Nucleotidyltransferase involved in the post-translational modification of proteins. It can catalyze the addition of adenosine monophosphate (AMP) or uridine monophosphate (UMP) to a protein, resulting in modifications known as AMPylation and UMPylation.</text>
</comment>
<comment type="catalytic activity">
    <reaction evidence="1">
        <text>L-seryl-[protein] + ATP = 3-O-(5'-adenylyl)-L-seryl-[protein] + diphosphate</text>
        <dbReference type="Rhea" id="RHEA:58120"/>
        <dbReference type="Rhea" id="RHEA-COMP:9863"/>
        <dbReference type="Rhea" id="RHEA-COMP:15073"/>
        <dbReference type="ChEBI" id="CHEBI:29999"/>
        <dbReference type="ChEBI" id="CHEBI:30616"/>
        <dbReference type="ChEBI" id="CHEBI:33019"/>
        <dbReference type="ChEBI" id="CHEBI:142516"/>
        <dbReference type="EC" id="2.7.7.108"/>
    </reaction>
</comment>
<comment type="catalytic activity">
    <reaction evidence="1">
        <text>L-threonyl-[protein] + ATP = 3-O-(5'-adenylyl)-L-threonyl-[protein] + diphosphate</text>
        <dbReference type="Rhea" id="RHEA:54292"/>
        <dbReference type="Rhea" id="RHEA-COMP:11060"/>
        <dbReference type="Rhea" id="RHEA-COMP:13847"/>
        <dbReference type="ChEBI" id="CHEBI:30013"/>
        <dbReference type="ChEBI" id="CHEBI:30616"/>
        <dbReference type="ChEBI" id="CHEBI:33019"/>
        <dbReference type="ChEBI" id="CHEBI:138113"/>
        <dbReference type="EC" id="2.7.7.108"/>
    </reaction>
</comment>
<comment type="catalytic activity">
    <reaction evidence="1">
        <text>L-tyrosyl-[protein] + ATP = O-(5'-adenylyl)-L-tyrosyl-[protein] + diphosphate</text>
        <dbReference type="Rhea" id="RHEA:54288"/>
        <dbReference type="Rhea" id="RHEA-COMP:10136"/>
        <dbReference type="Rhea" id="RHEA-COMP:13846"/>
        <dbReference type="ChEBI" id="CHEBI:30616"/>
        <dbReference type="ChEBI" id="CHEBI:33019"/>
        <dbReference type="ChEBI" id="CHEBI:46858"/>
        <dbReference type="ChEBI" id="CHEBI:83624"/>
        <dbReference type="EC" id="2.7.7.108"/>
    </reaction>
</comment>
<comment type="catalytic activity">
    <reaction evidence="1">
        <text>L-histidyl-[protein] + UTP = N(tele)-(5'-uridylyl)-L-histidyl-[protein] + diphosphate</text>
        <dbReference type="Rhea" id="RHEA:83891"/>
        <dbReference type="Rhea" id="RHEA-COMP:9745"/>
        <dbReference type="Rhea" id="RHEA-COMP:20239"/>
        <dbReference type="ChEBI" id="CHEBI:29979"/>
        <dbReference type="ChEBI" id="CHEBI:33019"/>
        <dbReference type="ChEBI" id="CHEBI:46398"/>
        <dbReference type="ChEBI" id="CHEBI:233474"/>
    </reaction>
</comment>
<comment type="catalytic activity">
    <reaction evidence="1">
        <text>L-seryl-[protein] + UTP = O-(5'-uridylyl)-L-seryl-[protein] + diphosphate</text>
        <dbReference type="Rhea" id="RHEA:64604"/>
        <dbReference type="Rhea" id="RHEA-COMP:9863"/>
        <dbReference type="Rhea" id="RHEA-COMP:16635"/>
        <dbReference type="ChEBI" id="CHEBI:29999"/>
        <dbReference type="ChEBI" id="CHEBI:33019"/>
        <dbReference type="ChEBI" id="CHEBI:46398"/>
        <dbReference type="ChEBI" id="CHEBI:156051"/>
    </reaction>
</comment>
<comment type="catalytic activity">
    <reaction evidence="1">
        <text>L-tyrosyl-[protein] + UTP = O-(5'-uridylyl)-L-tyrosyl-[protein] + diphosphate</text>
        <dbReference type="Rhea" id="RHEA:83887"/>
        <dbReference type="Rhea" id="RHEA-COMP:10136"/>
        <dbReference type="Rhea" id="RHEA-COMP:20238"/>
        <dbReference type="ChEBI" id="CHEBI:33019"/>
        <dbReference type="ChEBI" id="CHEBI:46398"/>
        <dbReference type="ChEBI" id="CHEBI:46858"/>
        <dbReference type="ChEBI" id="CHEBI:90602"/>
    </reaction>
</comment>
<comment type="cofactor">
    <cofactor evidence="1">
        <name>Mg(2+)</name>
        <dbReference type="ChEBI" id="CHEBI:18420"/>
    </cofactor>
    <cofactor evidence="1">
        <name>Mn(2+)</name>
        <dbReference type="ChEBI" id="CHEBI:29035"/>
    </cofactor>
</comment>
<comment type="similarity">
    <text evidence="1">Belongs to the SELO family.</text>
</comment>
<name>SELO_AZOSB</name>
<accession>A1K5T6</accession>
<protein>
    <recommendedName>
        <fullName evidence="1">Protein nucleotidyltransferase YdiU</fullName>
        <ecNumber evidence="1">2.7.7.-</ecNumber>
    </recommendedName>
    <alternativeName>
        <fullName evidence="1">Protein adenylyltransferase YdiU</fullName>
        <ecNumber evidence="1">2.7.7.108</ecNumber>
    </alternativeName>
    <alternativeName>
        <fullName evidence="1">Protein uridylyltransferase YdiU</fullName>
        <ecNumber evidence="1">2.7.7.-</ecNumber>
    </alternativeName>
</protein>
<organism>
    <name type="scientific">Azoarcus sp. (strain BH72)</name>
    <dbReference type="NCBI Taxonomy" id="418699"/>
    <lineage>
        <taxon>Bacteria</taxon>
        <taxon>Pseudomonadati</taxon>
        <taxon>Pseudomonadota</taxon>
        <taxon>Betaproteobacteria</taxon>
        <taxon>Rhodocyclales</taxon>
        <taxon>Zoogloeaceae</taxon>
        <taxon>Azoarcus</taxon>
    </lineage>
</organism>
<keyword id="KW-0067">ATP-binding</keyword>
<keyword id="KW-0460">Magnesium</keyword>
<keyword id="KW-0464">Manganese</keyword>
<keyword id="KW-0479">Metal-binding</keyword>
<keyword id="KW-0547">Nucleotide-binding</keyword>
<keyword id="KW-0548">Nucleotidyltransferase</keyword>
<keyword id="KW-1185">Reference proteome</keyword>
<keyword id="KW-0808">Transferase</keyword>
<reference key="1">
    <citation type="journal article" date="2006" name="Nat. Biotechnol.">
        <title>Complete genome of the mutualistic, N2-fixing grass endophyte Azoarcus sp. strain BH72.</title>
        <authorList>
            <person name="Krause A."/>
            <person name="Ramakumar A."/>
            <person name="Bartels D."/>
            <person name="Battistoni F."/>
            <person name="Bekel T."/>
            <person name="Boch J."/>
            <person name="Boehm M."/>
            <person name="Friedrich F."/>
            <person name="Hurek T."/>
            <person name="Krause L."/>
            <person name="Linke B."/>
            <person name="McHardy A.C."/>
            <person name="Sarkar A."/>
            <person name="Schneiker S."/>
            <person name="Syed A.A."/>
            <person name="Thauer R."/>
            <person name="Vorhoelter F.-J."/>
            <person name="Weidner S."/>
            <person name="Puehler A."/>
            <person name="Reinhold-Hurek B."/>
            <person name="Kaiser O."/>
            <person name="Goesmann A."/>
        </authorList>
    </citation>
    <scope>NUCLEOTIDE SEQUENCE [LARGE SCALE GENOMIC DNA]</scope>
    <source>
        <strain>BH72</strain>
    </source>
</reference>
<sequence>MRPLVFDNRFVRELPADPETGPHTRQVAGASYSRVNPTPVAAPHLVAHSAEVAALLGWDESDIASPEFAEVFGGNRLLDGMEPYAACYGGHQFGNWAGQLGDGRAITLGEVLNGQGGRWELQLKGAGPTPYSRRADGRAVLRSSIREFLCSEAMHHLGVPTTRALSLVGTGEKVVRDMFYDGNPQAEPGAIVCRVAPSFIRFGNFELLAARGDLDLLNRLIDFTIARDFPGIEGSARDKRARWFETVCARTATMVAHWMRVGFVHGVMNTDNMSILGLTIDYGPYGWVDNFDPGWTPNTTDAGGRRYRFGHQPRIANWNLLQLANALFPAFGSTEALQAGLNTYAEVYDRESRAMTAAKLGLAALADADLPMVDALHGWMKRAEVDMTLFFRALAEVDLLKPDPALFLDAFYDDAKRLETAEEFSGWLRLYADRCRQEGLDADQRRARMNAANPRYVMRNYLAQQAIDAAEQGDYGPVRSLLDVMRRPYDEQPERAAYAQRRPDWARERAGCSMLSCSS</sequence>
<gene>
    <name evidence="1" type="primary">ydiU</name>
    <name evidence="1" type="synonym">selO</name>
    <name type="ordered locus">azo1574</name>
</gene>
<dbReference type="EC" id="2.7.7.-" evidence="1"/>
<dbReference type="EC" id="2.7.7.108" evidence="1"/>
<dbReference type="EMBL" id="AM406670">
    <property type="protein sequence ID" value="CAL94191.1"/>
    <property type="molecule type" value="Genomic_DNA"/>
</dbReference>
<dbReference type="RefSeq" id="WP_011765307.1">
    <property type="nucleotide sequence ID" value="NC_008702.1"/>
</dbReference>
<dbReference type="SMR" id="A1K5T6"/>
<dbReference type="STRING" id="62928.azo1574"/>
<dbReference type="KEGG" id="azo:azo1574"/>
<dbReference type="eggNOG" id="COG0397">
    <property type="taxonomic scope" value="Bacteria"/>
</dbReference>
<dbReference type="HOGENOM" id="CLU_010245_4_0_4"/>
<dbReference type="Proteomes" id="UP000002588">
    <property type="component" value="Chromosome"/>
</dbReference>
<dbReference type="GO" id="GO:0070733">
    <property type="term" value="F:AMPylase activity"/>
    <property type="evidence" value="ECO:0007669"/>
    <property type="project" value="RHEA"/>
</dbReference>
<dbReference type="GO" id="GO:0005524">
    <property type="term" value="F:ATP binding"/>
    <property type="evidence" value="ECO:0007669"/>
    <property type="project" value="UniProtKB-UniRule"/>
</dbReference>
<dbReference type="GO" id="GO:0000287">
    <property type="term" value="F:magnesium ion binding"/>
    <property type="evidence" value="ECO:0007669"/>
    <property type="project" value="UniProtKB-UniRule"/>
</dbReference>
<dbReference type="HAMAP" id="MF_00692">
    <property type="entry name" value="YdiU_SelO"/>
    <property type="match status" value="1"/>
</dbReference>
<dbReference type="InterPro" id="IPR003846">
    <property type="entry name" value="SelO"/>
</dbReference>
<dbReference type="NCBIfam" id="NF000658">
    <property type="entry name" value="PRK00029.1"/>
    <property type="match status" value="1"/>
</dbReference>
<dbReference type="PANTHER" id="PTHR32057">
    <property type="entry name" value="PROTEIN ADENYLYLTRANSFERASE SELO, MITOCHONDRIAL"/>
    <property type="match status" value="1"/>
</dbReference>
<dbReference type="PANTHER" id="PTHR32057:SF14">
    <property type="entry name" value="PROTEIN ADENYLYLTRANSFERASE SELO, MITOCHONDRIAL"/>
    <property type="match status" value="1"/>
</dbReference>
<dbReference type="Pfam" id="PF02696">
    <property type="entry name" value="SelO"/>
    <property type="match status" value="1"/>
</dbReference>
<proteinExistence type="inferred from homology"/>
<feature type="chain" id="PRO_1000045237" description="Protein nucleotidyltransferase YdiU">
    <location>
        <begin position="1"/>
        <end position="519"/>
    </location>
</feature>
<feature type="active site" description="Proton acceptor" evidence="1">
    <location>
        <position position="271"/>
    </location>
</feature>
<feature type="binding site" evidence="1">
    <location>
        <position position="101"/>
    </location>
    <ligand>
        <name>ATP</name>
        <dbReference type="ChEBI" id="CHEBI:30616"/>
    </ligand>
</feature>
<feature type="binding site" evidence="1">
    <location>
        <position position="103"/>
    </location>
    <ligand>
        <name>ATP</name>
        <dbReference type="ChEBI" id="CHEBI:30616"/>
    </ligand>
</feature>
<feature type="binding site" evidence="1">
    <location>
        <position position="104"/>
    </location>
    <ligand>
        <name>ATP</name>
        <dbReference type="ChEBI" id="CHEBI:30616"/>
    </ligand>
</feature>
<feature type="binding site" evidence="1">
    <location>
        <position position="124"/>
    </location>
    <ligand>
        <name>ATP</name>
        <dbReference type="ChEBI" id="CHEBI:30616"/>
    </ligand>
</feature>
<feature type="binding site" evidence="1">
    <location>
        <position position="136"/>
    </location>
    <ligand>
        <name>ATP</name>
        <dbReference type="ChEBI" id="CHEBI:30616"/>
    </ligand>
</feature>
<feature type="binding site" evidence="1">
    <location>
        <position position="137"/>
    </location>
    <ligand>
        <name>ATP</name>
        <dbReference type="ChEBI" id="CHEBI:30616"/>
    </ligand>
</feature>
<feature type="binding site" evidence="1">
    <location>
        <position position="194"/>
    </location>
    <ligand>
        <name>ATP</name>
        <dbReference type="ChEBI" id="CHEBI:30616"/>
    </ligand>
</feature>
<feature type="binding site" evidence="1">
    <location>
        <position position="201"/>
    </location>
    <ligand>
        <name>ATP</name>
        <dbReference type="ChEBI" id="CHEBI:30616"/>
    </ligand>
</feature>
<feature type="binding site" evidence="1">
    <location>
        <position position="272"/>
    </location>
    <ligand>
        <name>Mg(2+)</name>
        <dbReference type="ChEBI" id="CHEBI:18420"/>
    </ligand>
</feature>
<feature type="binding site" evidence="1">
    <location>
        <position position="281"/>
    </location>
    <ligand>
        <name>ATP</name>
        <dbReference type="ChEBI" id="CHEBI:30616"/>
    </ligand>
</feature>
<feature type="binding site" evidence="1">
    <location>
        <position position="281"/>
    </location>
    <ligand>
        <name>Mg(2+)</name>
        <dbReference type="ChEBI" id="CHEBI:18420"/>
    </ligand>
</feature>